<organism>
    <name type="scientific">Commelina yellow mottle virus</name>
    <name type="common">CoYMV</name>
    <dbReference type="NCBI Taxonomy" id="10653"/>
    <lineage>
        <taxon>Viruses</taxon>
        <taxon>Riboviria</taxon>
        <taxon>Pararnavirae</taxon>
        <taxon>Artverviricota</taxon>
        <taxon>Revtraviricetes</taxon>
        <taxon>Ortervirales</taxon>
        <taxon>Caulimoviridae</taxon>
        <taxon>Badnavirus</taxon>
        <taxon>Badnavirus maculacommelinae</taxon>
    </lineage>
</organism>
<proteinExistence type="predicted"/>
<feature type="chain" id="PRO_0000223038" description="Uncharacterized 15 kDa protein">
    <location>
        <begin position="1"/>
        <end position="135"/>
    </location>
</feature>
<organismHost>
    <name type="scientific">Commelina</name>
    <dbReference type="NCBI Taxonomy" id="4743"/>
</organismHost>
<name>YOR2_COYMV</name>
<reference key="1">
    <citation type="journal article" date="1990" name="Nucleic Acids Res.">
        <title>Properties of Commelina yellow mottle virus's complete DNA sequence, genomic discontinuities and transcript suggest that it is a pararetrovirus.</title>
        <authorList>
            <person name="Medberry S.L."/>
            <person name="Lockhart Olszewski N.E."/>
        </authorList>
    </citation>
    <scope>NUCLEOTIDE SEQUENCE [GENOMIC DNA]</scope>
</reference>
<accession>P19201</accession>
<protein>
    <recommendedName>
        <fullName>Uncharacterized 15 kDa protein</fullName>
    </recommendedName>
    <alternativeName>
        <fullName>ORF2</fullName>
    </alternativeName>
</protein>
<keyword id="KW-1185">Reference proteome</keyword>
<sequence>MSNITESKGYKEALSVTNNYLAPAIGIGGATDVGLTGVTKQLNTTIYLVAKITQQIEDLQSTIKRLEERVQSLEKAKTPVVTQDPNPEIISKLSDIQISLARQRAVNPAISGVSNYTAPTIKKVDRILRVFKKFN</sequence>
<dbReference type="EMBL" id="X52938">
    <property type="protein sequence ID" value="CAA37109.1"/>
    <property type="molecule type" value="Genomic_DNA"/>
</dbReference>
<dbReference type="PIR" id="S11478">
    <property type="entry name" value="S11478"/>
</dbReference>
<dbReference type="RefSeq" id="NP_039819.1">
    <property type="nucleotide sequence ID" value="NC_001343.1"/>
</dbReference>
<dbReference type="SMR" id="P19201"/>
<dbReference type="GeneID" id="1489552"/>
<dbReference type="KEGG" id="vg:1489552"/>
<dbReference type="Proteomes" id="UP000002243">
    <property type="component" value="Genome"/>
</dbReference>